<proteinExistence type="evidence at protein level"/>
<gene>
    <name evidence="9" type="primary">CDPK3</name>
    <name evidence="11" type="ORF">PBANKA_0408200</name>
</gene>
<feature type="chain" id="PRO_0000452963" description="Calcium-dependent protein kinase 3">
    <location>
        <begin position="1"/>
        <end position="554"/>
    </location>
</feature>
<feature type="domain" description="Protein kinase" evidence="3">
    <location>
        <begin position="110"/>
        <end position="365"/>
    </location>
</feature>
<feature type="domain" description="EF-hand 1" evidence="4">
    <location>
        <begin position="410"/>
        <end position="445"/>
    </location>
</feature>
<feature type="domain" description="EF-hand 2" evidence="4">
    <location>
        <begin position="448"/>
        <end position="479"/>
    </location>
</feature>
<feature type="domain" description="EF-hand 3" evidence="4">
    <location>
        <begin position="480"/>
        <end position="515"/>
    </location>
</feature>
<feature type="domain" description="EF-hand 4" evidence="4">
    <location>
        <begin position="521"/>
        <end position="554"/>
    </location>
</feature>
<feature type="region of interest" description="Disordered" evidence="6">
    <location>
        <begin position="30"/>
        <end position="55"/>
    </location>
</feature>
<feature type="region of interest" description="J domain" evidence="1">
    <location>
        <begin position="385"/>
        <end position="420"/>
    </location>
</feature>
<feature type="short sequence motif" description="J domain autoinhibitory motif" evidence="1">
    <location>
        <begin position="385"/>
        <end position="393"/>
    </location>
</feature>
<feature type="short sequence motif" description="J domain EF-hand interaction motif" evidence="1">
    <location>
        <begin position="394"/>
        <end position="403"/>
    </location>
</feature>
<feature type="active site" description="Proton acceptor" evidence="5">
    <location>
        <position position="230"/>
    </location>
</feature>
<feature type="binding site" evidence="3">
    <location>
        <begin position="116"/>
        <end position="124"/>
    </location>
    <ligand>
        <name>ATP</name>
        <dbReference type="ChEBI" id="CHEBI:30616"/>
    </ligand>
</feature>
<feature type="binding site" evidence="3">
    <location>
        <position position="139"/>
    </location>
    <ligand>
        <name>ATP</name>
        <dbReference type="ChEBI" id="CHEBI:30616"/>
    </ligand>
</feature>
<feature type="binding site" evidence="4">
    <location>
        <position position="458"/>
    </location>
    <ligand>
        <name>Ca(2+)</name>
        <dbReference type="ChEBI" id="CHEBI:29108"/>
        <label>1</label>
        <note>low affinity</note>
    </ligand>
</feature>
<feature type="binding site" evidence="4">
    <location>
        <position position="460"/>
    </location>
    <ligand>
        <name>Ca(2+)</name>
        <dbReference type="ChEBI" id="CHEBI:29108"/>
        <label>1</label>
        <note>low affinity</note>
    </ligand>
</feature>
<feature type="binding site" evidence="4">
    <location>
        <position position="462"/>
    </location>
    <ligand>
        <name>Ca(2+)</name>
        <dbReference type="ChEBI" id="CHEBI:29108"/>
        <label>1</label>
        <note>low affinity</note>
    </ligand>
</feature>
<feature type="binding site" evidence="4">
    <location>
        <position position="464"/>
    </location>
    <ligand>
        <name>Ca(2+)</name>
        <dbReference type="ChEBI" id="CHEBI:29108"/>
        <label>1</label>
        <note>low affinity</note>
    </ligand>
</feature>
<feature type="binding site" evidence="4">
    <location>
        <position position="469"/>
    </location>
    <ligand>
        <name>Ca(2+)</name>
        <dbReference type="ChEBI" id="CHEBI:29108"/>
        <label>1</label>
        <note>low affinity</note>
    </ligand>
</feature>
<feature type="binding site" evidence="4">
    <location>
        <position position="493"/>
    </location>
    <ligand>
        <name>Ca(2+)</name>
        <dbReference type="ChEBI" id="CHEBI:29108"/>
        <label>2</label>
        <note>high affinity</note>
    </ligand>
</feature>
<feature type="binding site" evidence="4">
    <location>
        <position position="495"/>
    </location>
    <ligand>
        <name>Ca(2+)</name>
        <dbReference type="ChEBI" id="CHEBI:29108"/>
        <label>2</label>
        <note>high affinity</note>
    </ligand>
</feature>
<feature type="binding site" evidence="4">
    <location>
        <position position="497"/>
    </location>
    <ligand>
        <name>Ca(2+)</name>
        <dbReference type="ChEBI" id="CHEBI:29108"/>
        <label>2</label>
        <note>high affinity</note>
    </ligand>
</feature>
<feature type="binding site" evidence="4">
    <location>
        <position position="499"/>
    </location>
    <ligand>
        <name>Ca(2+)</name>
        <dbReference type="ChEBI" id="CHEBI:29108"/>
        <label>2</label>
        <note>high affinity</note>
    </ligand>
</feature>
<feature type="binding site" evidence="4">
    <location>
        <position position="504"/>
    </location>
    <ligand>
        <name>Ca(2+)</name>
        <dbReference type="ChEBI" id="CHEBI:29108"/>
        <label>2</label>
        <note>high affinity</note>
    </ligand>
</feature>
<feature type="binding site" evidence="4">
    <location>
        <position position="534"/>
    </location>
    <ligand>
        <name>Ca(2+)</name>
        <dbReference type="ChEBI" id="CHEBI:29108"/>
        <label>3</label>
        <note>high affinity</note>
    </ligand>
</feature>
<feature type="binding site" evidence="4">
    <location>
        <position position="536"/>
    </location>
    <ligand>
        <name>Ca(2+)</name>
        <dbReference type="ChEBI" id="CHEBI:29108"/>
        <label>3</label>
        <note>high affinity</note>
    </ligand>
</feature>
<feature type="binding site" evidence="4">
    <location>
        <position position="538"/>
    </location>
    <ligand>
        <name>Ca(2+)</name>
        <dbReference type="ChEBI" id="CHEBI:29108"/>
        <label>3</label>
        <note>high affinity</note>
    </ligand>
</feature>
<feature type="binding site" evidence="4">
    <location>
        <position position="540"/>
    </location>
    <ligand>
        <name>Ca(2+)</name>
        <dbReference type="ChEBI" id="CHEBI:29108"/>
        <label>3</label>
        <note>high affinity</note>
    </ligand>
</feature>
<feature type="binding site" evidence="4">
    <location>
        <position position="545"/>
    </location>
    <ligand>
        <name>Ca(2+)</name>
        <dbReference type="ChEBI" id="CHEBI:29108"/>
        <label>3</label>
        <note>high affinity</note>
    </ligand>
</feature>
<name>CDPK3_PLABA</name>
<accession>A0A509AFG4</accession>
<protein>
    <recommendedName>
        <fullName evidence="9">Calcium-dependent protein kinase 3</fullName>
        <ecNumber evidence="1">2.7.11.1</ecNumber>
    </recommendedName>
    <alternativeName>
        <fullName evidence="9">PbCDPK3</fullName>
    </alternativeName>
</protein>
<sequence>MNQLCVERNLSISTAYIKSKPKKYIERIKKKKSSNKSIKSQHKFEGSKIANKNNELKDIKSKDPKHYENHINKNTKHKDILLKSKRSDNFKFSRRGFILSFTGNLEDFYNLSEEPLGKGTYGCVYKATDKLLKIQRAVKVVSKKKLKNIPRFRQEIDIMKNLDHPNVIKLLETFEDEEQIYLIMDLCTGGELFDKIIKKGSFVEMYASFIMKQIFSVLNYLHIRNICHRDIKPENFLFYDKSTESLIKIIDFGLAAYFNDIDYEMKTKAGTPYYVAPQVLTGCYDYKCDLWSAGVLFYIILCGYPPFYGESDHEILSMVKKGKYNFKGKEWNNISEEAKDLIKRCLTIDSGKRINASEALKHPWFKKKKGSFNLDVKMDIHVLENFKNYALLLKLQKLAMTIIAQQSNDYDLQQLKTVFLYLDEDGKGNITKNQLKKGLENSGLKLPQNFDVLLDQIDSDGSGRIDYTEFLAAALDRKHLSKKLIYCAFRVFDVDNDGEITTAELAHILYNGNKKGSITQKDVNQVKKMIQEVDKNNDGKIDFYEFCEMMKLKY</sequence>
<organism evidence="12">
    <name type="scientific">Plasmodium berghei (strain Anka)</name>
    <dbReference type="NCBI Taxonomy" id="5823"/>
    <lineage>
        <taxon>Eukaryota</taxon>
        <taxon>Sar</taxon>
        <taxon>Alveolata</taxon>
        <taxon>Apicomplexa</taxon>
        <taxon>Aconoidasida</taxon>
        <taxon>Haemosporida</taxon>
        <taxon>Plasmodiidae</taxon>
        <taxon>Plasmodium</taxon>
        <taxon>Plasmodium (Vinckeia)</taxon>
    </lineage>
</organism>
<evidence type="ECO:0000250" key="1">
    <source>
        <dbReference type="UniProtKB" id="Q8IBS5"/>
    </source>
</evidence>
<evidence type="ECO:0000250" key="2">
    <source>
        <dbReference type="UniProtKB" id="Q9NJU9"/>
    </source>
</evidence>
<evidence type="ECO:0000255" key="3">
    <source>
        <dbReference type="PROSITE-ProRule" id="PRU00159"/>
    </source>
</evidence>
<evidence type="ECO:0000255" key="4">
    <source>
        <dbReference type="PROSITE-ProRule" id="PRU00448"/>
    </source>
</evidence>
<evidence type="ECO:0000255" key="5">
    <source>
        <dbReference type="PROSITE-ProRule" id="PRU10027"/>
    </source>
</evidence>
<evidence type="ECO:0000256" key="6">
    <source>
        <dbReference type="SAM" id="MobiDB-lite"/>
    </source>
</evidence>
<evidence type="ECO:0000269" key="7">
    <source>
    </source>
</evidence>
<evidence type="ECO:0000269" key="8">
    <source>
    </source>
</evidence>
<evidence type="ECO:0000303" key="9">
    <source>
    </source>
</evidence>
<evidence type="ECO:0000305" key="10"/>
<evidence type="ECO:0000312" key="11">
    <source>
        <dbReference type="EMBL" id="VUC54306.1"/>
    </source>
</evidence>
<evidence type="ECO:0000312" key="12">
    <source>
        <dbReference type="Proteomes" id="UP000074855"/>
    </source>
</evidence>
<comment type="function">
    <text evidence="1 7 8">Calcium-dependent protein kinase which acts as a sensor and effector of intracellular Ca(2+) levels probably in part downstream of cGMP-activated PKG kinase (By similarity). In the mosquito midgut, regulates the gliding motility of the ookinete which is essential for the ookinete to invade the midgut epithelium (PubMed:16796674). However, another study showed that while required for ookinete invasion of the midgut epithelium, is not required for ookinete gliding motility (PubMed:16430692).</text>
</comment>
<comment type="catalytic activity">
    <reaction evidence="1">
        <text>L-seryl-[protein] + ATP = O-phospho-L-seryl-[protein] + ADP + H(+)</text>
        <dbReference type="Rhea" id="RHEA:17989"/>
        <dbReference type="Rhea" id="RHEA-COMP:9863"/>
        <dbReference type="Rhea" id="RHEA-COMP:11604"/>
        <dbReference type="ChEBI" id="CHEBI:15378"/>
        <dbReference type="ChEBI" id="CHEBI:29999"/>
        <dbReference type="ChEBI" id="CHEBI:30616"/>
        <dbReference type="ChEBI" id="CHEBI:83421"/>
        <dbReference type="ChEBI" id="CHEBI:456216"/>
        <dbReference type="EC" id="2.7.11.1"/>
    </reaction>
</comment>
<comment type="catalytic activity">
    <reaction evidence="1">
        <text>L-threonyl-[protein] + ATP = O-phospho-L-threonyl-[protein] + ADP + H(+)</text>
        <dbReference type="Rhea" id="RHEA:46608"/>
        <dbReference type="Rhea" id="RHEA-COMP:11060"/>
        <dbReference type="Rhea" id="RHEA-COMP:11605"/>
        <dbReference type="ChEBI" id="CHEBI:15378"/>
        <dbReference type="ChEBI" id="CHEBI:30013"/>
        <dbReference type="ChEBI" id="CHEBI:30616"/>
        <dbReference type="ChEBI" id="CHEBI:61977"/>
        <dbReference type="ChEBI" id="CHEBI:456216"/>
        <dbReference type="EC" id="2.7.11.1"/>
    </reaction>
</comment>
<comment type="cofactor">
    <cofactor evidence="1">
        <name>Mg(2+)</name>
        <dbReference type="ChEBI" id="CHEBI:18420"/>
    </cofactor>
</comment>
<comment type="activity regulation">
    <text evidence="1 2">Activated by calcium (By similarity). Upon calcium binding to the EF-hand domain 2, the C-terminus of the junction domain (J domain) undergoes a conformational change which results in the dissociation of the pseudo-substrate inhibitory motif from the catalytic domain (By similarity). This, in turn, may facilitate the autophosphorylation of the activation loop at Thr-271, which leads to the kinase activation (By similarity).</text>
</comment>
<comment type="subcellular location">
    <subcellularLocation>
        <location evidence="7">Cytoplasm</location>
    </subcellularLocation>
</comment>
<comment type="developmental stage">
    <text evidence="7">Expressed in ookinetes; expression increases during ookinete maturation (at protein level).</text>
</comment>
<comment type="domain">
    <text evidence="2">The EF-hand domain 1 cannot bind calcium due to the presence of a Lys instead of an Asp at position 427 and a Gln instead of a Glu at position 434 preventing calcium binding (By similarity). The EF-hand domains 3 and 4 probably bind calcium constitutively when calcium levels are low, while the EF-hand domain 2 binds calcium following an increase in calcium levels (By similarity).</text>
</comment>
<comment type="domain">
    <text evidence="1">The junction domain (J domain) is composed of 2 motifs that maintain the kinase inactive. The N-terminal autoinhibitory motif acts as a pseudosubstrate inhibiting the catalytic domain while the C-terminal motif binds the EF-hand domains.</text>
</comment>
<comment type="disruption phenotype">
    <text evidence="7 8">In the mosquito midgut, the number of oocysts are reduced which is caused by a failure of ookinetes to migrate to and transverse midgut epithelium (PubMed:16430692, PubMed:16796674). Abnormal motility of ookinetes, characterized by frequent flexing, bending, twirling, pendular motions and a failure to disperse (PubMed:16796674). However, another study shows no defect in ookinete motility (PubMed:16430692). Development and morphology of ookinetes are normal (PubMed:16430692, PubMed:16796674). Sporozoite motility and infectivity are normal (PubMed:16430692, PubMed:16796674). When injected directly into the mosquito haemocoel, thus bypassing the requirement to transverse the midgut epithelium, ookinetes mature normally into oocysts (PubMed:16796674).</text>
</comment>
<comment type="similarity">
    <text evidence="10">Belongs to the protein kinase superfamily. Ser/Thr protein kinase family. CDPK subfamily.</text>
</comment>
<keyword id="KW-0067">ATP-binding</keyword>
<keyword id="KW-0106">Calcium</keyword>
<keyword id="KW-0963">Cytoplasm</keyword>
<keyword id="KW-0418">Kinase</keyword>
<keyword id="KW-0460">Magnesium</keyword>
<keyword id="KW-0479">Metal-binding</keyword>
<keyword id="KW-0547">Nucleotide-binding</keyword>
<keyword id="KW-1185">Reference proteome</keyword>
<keyword id="KW-0677">Repeat</keyword>
<keyword id="KW-0723">Serine/threonine-protein kinase</keyword>
<keyword id="KW-0808">Transferase</keyword>
<dbReference type="EC" id="2.7.11.1" evidence="1"/>
<dbReference type="EMBL" id="LK023119">
    <property type="protein sequence ID" value="VUC54306.1"/>
    <property type="molecule type" value="Genomic_DNA"/>
</dbReference>
<dbReference type="RefSeq" id="XP_675146.1">
    <property type="nucleotide sequence ID" value="XM_670054.1"/>
</dbReference>
<dbReference type="SMR" id="A0A509AFG4"/>
<dbReference type="FunCoup" id="A0A509AFG4">
    <property type="interactions" value="5"/>
</dbReference>
<dbReference type="STRING" id="5823.A0A509AFG4"/>
<dbReference type="VEuPathDB" id="PlasmoDB:PBANKA_0408200"/>
<dbReference type="InParanoid" id="A0A509AFG4"/>
<dbReference type="OMA" id="YGESDHE"/>
<dbReference type="Proteomes" id="UP000074855">
    <property type="component" value="Chromosome 4"/>
</dbReference>
<dbReference type="GO" id="GO:0005737">
    <property type="term" value="C:cytoplasm"/>
    <property type="evidence" value="ECO:0007669"/>
    <property type="project" value="UniProtKB-SubCell"/>
</dbReference>
<dbReference type="GO" id="GO:0005524">
    <property type="term" value="F:ATP binding"/>
    <property type="evidence" value="ECO:0007669"/>
    <property type="project" value="UniProtKB-KW"/>
</dbReference>
<dbReference type="GO" id="GO:0005509">
    <property type="term" value="F:calcium ion binding"/>
    <property type="evidence" value="ECO:0007669"/>
    <property type="project" value="InterPro"/>
</dbReference>
<dbReference type="GO" id="GO:0004674">
    <property type="term" value="F:protein serine/threonine kinase activity"/>
    <property type="evidence" value="ECO:0007669"/>
    <property type="project" value="UniProtKB-KW"/>
</dbReference>
<dbReference type="GO" id="GO:0030335">
    <property type="term" value="P:positive regulation of cell migration"/>
    <property type="evidence" value="ECO:0000315"/>
    <property type="project" value="UniProtKB"/>
</dbReference>
<dbReference type="GO" id="GO:2000147">
    <property type="term" value="P:positive regulation of cell motility"/>
    <property type="evidence" value="ECO:0000315"/>
    <property type="project" value="UniProtKB"/>
</dbReference>
<dbReference type="CDD" id="cd00051">
    <property type="entry name" value="EFh"/>
    <property type="match status" value="1"/>
</dbReference>
<dbReference type="CDD" id="cd05117">
    <property type="entry name" value="STKc_CAMK"/>
    <property type="match status" value="1"/>
</dbReference>
<dbReference type="FunFam" id="3.30.200.20:FF:000315">
    <property type="entry name" value="Calcium-dependent protein kinase 3"/>
    <property type="match status" value="1"/>
</dbReference>
<dbReference type="FunFam" id="1.10.238.10:FF:000003">
    <property type="entry name" value="Calmodulin A"/>
    <property type="match status" value="1"/>
</dbReference>
<dbReference type="FunFam" id="1.10.510.10:FF:000739">
    <property type="entry name" value="CAMK/CDPK protein kinase"/>
    <property type="match status" value="1"/>
</dbReference>
<dbReference type="Gene3D" id="1.10.238.10">
    <property type="entry name" value="EF-hand"/>
    <property type="match status" value="2"/>
</dbReference>
<dbReference type="Gene3D" id="3.30.200.20">
    <property type="entry name" value="Phosphorylase Kinase, domain 1"/>
    <property type="match status" value="1"/>
</dbReference>
<dbReference type="Gene3D" id="1.10.510.10">
    <property type="entry name" value="Transferase(Phosphotransferase) domain 1"/>
    <property type="match status" value="1"/>
</dbReference>
<dbReference type="InterPro" id="IPR050205">
    <property type="entry name" value="CDPK_Ser/Thr_kinases"/>
</dbReference>
<dbReference type="InterPro" id="IPR011992">
    <property type="entry name" value="EF-hand-dom_pair"/>
</dbReference>
<dbReference type="InterPro" id="IPR018247">
    <property type="entry name" value="EF_Hand_1_Ca_BS"/>
</dbReference>
<dbReference type="InterPro" id="IPR002048">
    <property type="entry name" value="EF_hand_dom"/>
</dbReference>
<dbReference type="InterPro" id="IPR011009">
    <property type="entry name" value="Kinase-like_dom_sf"/>
</dbReference>
<dbReference type="InterPro" id="IPR000719">
    <property type="entry name" value="Prot_kinase_dom"/>
</dbReference>
<dbReference type="InterPro" id="IPR017441">
    <property type="entry name" value="Protein_kinase_ATP_BS"/>
</dbReference>
<dbReference type="InterPro" id="IPR008271">
    <property type="entry name" value="Ser/Thr_kinase_AS"/>
</dbReference>
<dbReference type="PANTHER" id="PTHR24349">
    <property type="entry name" value="SERINE/THREONINE-PROTEIN KINASE"/>
    <property type="match status" value="1"/>
</dbReference>
<dbReference type="Pfam" id="PF13499">
    <property type="entry name" value="EF-hand_7"/>
    <property type="match status" value="2"/>
</dbReference>
<dbReference type="Pfam" id="PF00069">
    <property type="entry name" value="Pkinase"/>
    <property type="match status" value="1"/>
</dbReference>
<dbReference type="SMART" id="SM00054">
    <property type="entry name" value="EFh"/>
    <property type="match status" value="4"/>
</dbReference>
<dbReference type="SMART" id="SM00220">
    <property type="entry name" value="S_TKc"/>
    <property type="match status" value="1"/>
</dbReference>
<dbReference type="SUPFAM" id="SSF47473">
    <property type="entry name" value="EF-hand"/>
    <property type="match status" value="1"/>
</dbReference>
<dbReference type="SUPFAM" id="SSF56112">
    <property type="entry name" value="Protein kinase-like (PK-like)"/>
    <property type="match status" value="1"/>
</dbReference>
<dbReference type="PROSITE" id="PS00018">
    <property type="entry name" value="EF_HAND_1"/>
    <property type="match status" value="3"/>
</dbReference>
<dbReference type="PROSITE" id="PS50222">
    <property type="entry name" value="EF_HAND_2"/>
    <property type="match status" value="4"/>
</dbReference>
<dbReference type="PROSITE" id="PS00107">
    <property type="entry name" value="PROTEIN_KINASE_ATP"/>
    <property type="match status" value="1"/>
</dbReference>
<dbReference type="PROSITE" id="PS50011">
    <property type="entry name" value="PROTEIN_KINASE_DOM"/>
    <property type="match status" value="1"/>
</dbReference>
<dbReference type="PROSITE" id="PS00108">
    <property type="entry name" value="PROTEIN_KINASE_ST"/>
    <property type="match status" value="1"/>
</dbReference>
<reference evidence="12" key="1">
    <citation type="journal article" date="2014" name="BMC Biol.">
        <title>A comprehensive evaluation of rodent malaria parasite genomes and gene expression.</title>
        <authorList>
            <person name="Otto T.D."/>
            <person name="Bohme U."/>
            <person name="Jackson A.P."/>
            <person name="Hunt M."/>
            <person name="Franke-Fayard B."/>
            <person name="Hoeijmakers W.A."/>
            <person name="Religa A.A."/>
            <person name="Robertson L."/>
            <person name="Sanders M."/>
            <person name="Ogun S.A."/>
            <person name="Cunningham D."/>
            <person name="Erhart A."/>
            <person name="Billker O."/>
            <person name="Khan S.M."/>
            <person name="Stunnenberg H.G."/>
            <person name="Langhorne J."/>
            <person name="Holder A.A."/>
            <person name="Waters A.P."/>
            <person name="Newbold C.I."/>
            <person name="Pain A."/>
            <person name="Berriman M."/>
            <person name="Janse C.J."/>
        </authorList>
    </citation>
    <scope>NUCLEOTIDE SEQUENCE [LARGE SCALE GENOMIC DNA]</scope>
    <source>
        <strain evidence="12">ANKA</strain>
    </source>
</reference>
<reference evidence="10" key="2">
    <citation type="journal article" date="2006" name="Mol. Microbiol.">
        <title>A calcium-dependent protein kinase regulates Plasmodium ookinete access to the midgut epithelial cell.</title>
        <authorList>
            <person name="Ishino T."/>
            <person name="Orito Y."/>
            <person name="Chinzei Y."/>
            <person name="Yuda M."/>
        </authorList>
    </citation>
    <scope>FUNCTION</scope>
    <scope>SUBCELLULAR LOCATION</scope>
    <scope>DEVELOPMENTAL STAGE</scope>
    <scope>DISRUPTION PHENOTYPE</scope>
</reference>
<reference evidence="10" key="3">
    <citation type="journal article" date="2006" name="Mol. Microbiol.">
        <title>Plasmodium berghei calcium-dependent protein kinase 3 is required for ookinete gliding motility and mosquito midgut invasion.</title>
        <authorList>
            <person name="Siden-Kiamos I."/>
            <person name="Ecker A."/>
            <person name="Nybaeck S."/>
            <person name="Louis C."/>
            <person name="Sinden R.E."/>
            <person name="Billker O."/>
        </authorList>
    </citation>
    <scope>FUNCTION</scope>
    <scope>DISRUPTION PHENOTYPE</scope>
</reference>